<comment type="catalytic activity">
    <reaction evidence="1">
        <text>2-formamido-N(1)-(5-O-phospho-beta-D-ribosyl)acetamidine + ATP = 5-amino-1-(5-phospho-beta-D-ribosyl)imidazole + ADP + phosphate + H(+)</text>
        <dbReference type="Rhea" id="RHEA:23032"/>
        <dbReference type="ChEBI" id="CHEBI:15378"/>
        <dbReference type="ChEBI" id="CHEBI:30616"/>
        <dbReference type="ChEBI" id="CHEBI:43474"/>
        <dbReference type="ChEBI" id="CHEBI:137981"/>
        <dbReference type="ChEBI" id="CHEBI:147287"/>
        <dbReference type="ChEBI" id="CHEBI:456216"/>
        <dbReference type="EC" id="6.3.3.1"/>
    </reaction>
</comment>
<comment type="pathway">
    <text evidence="1">Purine metabolism; IMP biosynthesis via de novo pathway; 5-amino-1-(5-phospho-D-ribosyl)imidazole from N(2)-formyl-N(1)-(5-phospho-D-ribosyl)glycinamide: step 2/2.</text>
</comment>
<comment type="subcellular location">
    <subcellularLocation>
        <location evidence="1">Cytoplasm</location>
    </subcellularLocation>
</comment>
<comment type="similarity">
    <text evidence="1">Belongs to the AIR synthase family.</text>
</comment>
<dbReference type="EC" id="6.3.3.1" evidence="1"/>
<dbReference type="EMBL" id="CP001359">
    <property type="protein sequence ID" value="ACL66039.1"/>
    <property type="molecule type" value="Genomic_DNA"/>
</dbReference>
<dbReference type="RefSeq" id="WP_012633809.1">
    <property type="nucleotide sequence ID" value="NC_011891.1"/>
</dbReference>
<dbReference type="SMR" id="B8JDJ0"/>
<dbReference type="KEGG" id="acp:A2cp1_2702"/>
<dbReference type="HOGENOM" id="CLU_047116_0_0_7"/>
<dbReference type="UniPathway" id="UPA00074">
    <property type="reaction ID" value="UER00129"/>
</dbReference>
<dbReference type="Proteomes" id="UP000007089">
    <property type="component" value="Chromosome"/>
</dbReference>
<dbReference type="GO" id="GO:0005829">
    <property type="term" value="C:cytosol"/>
    <property type="evidence" value="ECO:0007669"/>
    <property type="project" value="TreeGrafter"/>
</dbReference>
<dbReference type="GO" id="GO:0005524">
    <property type="term" value="F:ATP binding"/>
    <property type="evidence" value="ECO:0007669"/>
    <property type="project" value="UniProtKB-KW"/>
</dbReference>
<dbReference type="GO" id="GO:0004637">
    <property type="term" value="F:phosphoribosylamine-glycine ligase activity"/>
    <property type="evidence" value="ECO:0007669"/>
    <property type="project" value="TreeGrafter"/>
</dbReference>
<dbReference type="GO" id="GO:0004641">
    <property type="term" value="F:phosphoribosylformylglycinamidine cyclo-ligase activity"/>
    <property type="evidence" value="ECO:0007669"/>
    <property type="project" value="UniProtKB-UniRule"/>
</dbReference>
<dbReference type="GO" id="GO:0006189">
    <property type="term" value="P:'de novo' IMP biosynthetic process"/>
    <property type="evidence" value="ECO:0007669"/>
    <property type="project" value="UniProtKB-UniRule"/>
</dbReference>
<dbReference type="GO" id="GO:0046084">
    <property type="term" value="P:adenine biosynthetic process"/>
    <property type="evidence" value="ECO:0007669"/>
    <property type="project" value="TreeGrafter"/>
</dbReference>
<dbReference type="CDD" id="cd02196">
    <property type="entry name" value="PurM"/>
    <property type="match status" value="1"/>
</dbReference>
<dbReference type="FunFam" id="3.30.1330.10:FF:000001">
    <property type="entry name" value="Phosphoribosylformylglycinamidine cyclo-ligase"/>
    <property type="match status" value="1"/>
</dbReference>
<dbReference type="FunFam" id="3.90.650.10:FF:000011">
    <property type="entry name" value="Phosphoribosylformylglycinamidine cyclo-ligase"/>
    <property type="match status" value="1"/>
</dbReference>
<dbReference type="Gene3D" id="3.90.650.10">
    <property type="entry name" value="PurM-like C-terminal domain"/>
    <property type="match status" value="1"/>
</dbReference>
<dbReference type="Gene3D" id="3.30.1330.10">
    <property type="entry name" value="PurM-like, N-terminal domain"/>
    <property type="match status" value="1"/>
</dbReference>
<dbReference type="HAMAP" id="MF_00741">
    <property type="entry name" value="AIRS"/>
    <property type="match status" value="1"/>
</dbReference>
<dbReference type="InterPro" id="IPR010918">
    <property type="entry name" value="PurM-like_C_dom"/>
</dbReference>
<dbReference type="InterPro" id="IPR036676">
    <property type="entry name" value="PurM-like_C_sf"/>
</dbReference>
<dbReference type="InterPro" id="IPR016188">
    <property type="entry name" value="PurM-like_N"/>
</dbReference>
<dbReference type="InterPro" id="IPR036921">
    <property type="entry name" value="PurM-like_N_sf"/>
</dbReference>
<dbReference type="InterPro" id="IPR004733">
    <property type="entry name" value="PurM_cligase"/>
</dbReference>
<dbReference type="NCBIfam" id="TIGR00878">
    <property type="entry name" value="purM"/>
    <property type="match status" value="1"/>
</dbReference>
<dbReference type="PANTHER" id="PTHR10520:SF12">
    <property type="entry name" value="TRIFUNCTIONAL PURINE BIOSYNTHETIC PROTEIN ADENOSINE-3"/>
    <property type="match status" value="1"/>
</dbReference>
<dbReference type="PANTHER" id="PTHR10520">
    <property type="entry name" value="TRIFUNCTIONAL PURINE BIOSYNTHETIC PROTEIN ADENOSINE-3-RELATED"/>
    <property type="match status" value="1"/>
</dbReference>
<dbReference type="Pfam" id="PF00586">
    <property type="entry name" value="AIRS"/>
    <property type="match status" value="1"/>
</dbReference>
<dbReference type="Pfam" id="PF02769">
    <property type="entry name" value="AIRS_C"/>
    <property type="match status" value="1"/>
</dbReference>
<dbReference type="SUPFAM" id="SSF56042">
    <property type="entry name" value="PurM C-terminal domain-like"/>
    <property type="match status" value="1"/>
</dbReference>
<dbReference type="SUPFAM" id="SSF55326">
    <property type="entry name" value="PurM N-terminal domain-like"/>
    <property type="match status" value="1"/>
</dbReference>
<organism>
    <name type="scientific">Anaeromyxobacter dehalogenans (strain 2CP-1 / ATCC BAA-258)</name>
    <dbReference type="NCBI Taxonomy" id="455488"/>
    <lineage>
        <taxon>Bacteria</taxon>
        <taxon>Pseudomonadati</taxon>
        <taxon>Myxococcota</taxon>
        <taxon>Myxococcia</taxon>
        <taxon>Myxococcales</taxon>
        <taxon>Cystobacterineae</taxon>
        <taxon>Anaeromyxobacteraceae</taxon>
        <taxon>Anaeromyxobacter</taxon>
    </lineage>
</organism>
<gene>
    <name evidence="1" type="primary">purM</name>
    <name type="ordered locus">A2cp1_2702</name>
</gene>
<accession>B8JDJ0</accession>
<sequence>MSLTYRDAGVDIDEGDRLVDLIKPHARPTLRPEVLGGIGGFGGLFALDVKKYREPVLVSGTDGVGTKLKVAFAADRHDTVGIDLVAMCVNDIAVVGAEPLFFLDYYATGKLSAEQGAQVVKGIAEGCRQAGCALIGGETAELPGFYERGEYDLAGFAVGCVDRPRIVDGTRVARGDVVIGIASSGLHSNGFSLARKALLERYPLDHRFDALGGRTLADALLEPTRIYAKDVLALLEQVPVRAFAHITGGGLPGNVPRTLPDGTRAVLEEQRWPRPAIFDLVEREGQVPRDEMYRTFNMGLGLVAVVAPGDEAAAHAALRARGLEAWTVGAIEAGGPGEATCEVVR</sequence>
<proteinExistence type="inferred from homology"/>
<reference key="1">
    <citation type="submission" date="2009-01" db="EMBL/GenBank/DDBJ databases">
        <title>Complete sequence of Anaeromyxobacter dehalogenans 2CP-1.</title>
        <authorList>
            <person name="Lucas S."/>
            <person name="Copeland A."/>
            <person name="Lapidus A."/>
            <person name="Glavina del Rio T."/>
            <person name="Dalin E."/>
            <person name="Tice H."/>
            <person name="Bruce D."/>
            <person name="Goodwin L."/>
            <person name="Pitluck S."/>
            <person name="Saunders E."/>
            <person name="Brettin T."/>
            <person name="Detter J.C."/>
            <person name="Han C."/>
            <person name="Larimer F."/>
            <person name="Land M."/>
            <person name="Hauser L."/>
            <person name="Kyrpides N."/>
            <person name="Ovchinnikova G."/>
            <person name="Beliaev A.S."/>
            <person name="Richardson P."/>
        </authorList>
    </citation>
    <scope>NUCLEOTIDE SEQUENCE [LARGE SCALE GENOMIC DNA]</scope>
    <source>
        <strain>2CP-1 / ATCC BAA-258</strain>
    </source>
</reference>
<name>PUR5_ANAD2</name>
<evidence type="ECO:0000255" key="1">
    <source>
        <dbReference type="HAMAP-Rule" id="MF_00741"/>
    </source>
</evidence>
<feature type="chain" id="PRO_1000148262" description="Phosphoribosylformylglycinamidine cyclo-ligase">
    <location>
        <begin position="1"/>
        <end position="345"/>
    </location>
</feature>
<keyword id="KW-0067">ATP-binding</keyword>
<keyword id="KW-0963">Cytoplasm</keyword>
<keyword id="KW-0436">Ligase</keyword>
<keyword id="KW-0547">Nucleotide-binding</keyword>
<keyword id="KW-0658">Purine biosynthesis</keyword>
<protein>
    <recommendedName>
        <fullName evidence="1">Phosphoribosylformylglycinamidine cyclo-ligase</fullName>
        <ecNumber evidence="1">6.3.3.1</ecNumber>
    </recommendedName>
    <alternativeName>
        <fullName evidence="1">AIR synthase</fullName>
    </alternativeName>
    <alternativeName>
        <fullName evidence="1">AIRS</fullName>
    </alternativeName>
    <alternativeName>
        <fullName evidence="1">Phosphoribosyl-aminoimidazole synthetase</fullName>
    </alternativeName>
</protein>